<reference key="1">
    <citation type="journal article" date="2005" name="Proc. Natl. Acad. Sci. U.S.A.">
        <title>The psychrophilic lifestyle as revealed by the genome sequence of Colwellia psychrerythraea 34H through genomic and proteomic analyses.</title>
        <authorList>
            <person name="Methe B.A."/>
            <person name="Nelson K.E."/>
            <person name="Deming J.W."/>
            <person name="Momen B."/>
            <person name="Melamud E."/>
            <person name="Zhang X."/>
            <person name="Moult J."/>
            <person name="Madupu R."/>
            <person name="Nelson W.C."/>
            <person name="Dodson R.J."/>
            <person name="Brinkac L.M."/>
            <person name="Daugherty S.C."/>
            <person name="Durkin A.S."/>
            <person name="DeBoy R.T."/>
            <person name="Kolonay J.F."/>
            <person name="Sullivan S.A."/>
            <person name="Zhou L."/>
            <person name="Davidsen T.M."/>
            <person name="Wu M."/>
            <person name="Huston A.L."/>
            <person name="Lewis M."/>
            <person name="Weaver B."/>
            <person name="Weidman J.F."/>
            <person name="Khouri H."/>
            <person name="Utterback T.R."/>
            <person name="Feldblyum T.V."/>
            <person name="Fraser C.M."/>
        </authorList>
    </citation>
    <scope>NUCLEOTIDE SEQUENCE [LARGE SCALE GENOMIC DNA]</scope>
    <source>
        <strain>34H / ATCC BAA-681</strain>
    </source>
</reference>
<protein>
    <recommendedName>
        <fullName evidence="1">Translation initiation factor IF-1</fullName>
    </recommendedName>
</protein>
<dbReference type="EMBL" id="CP000083">
    <property type="protein sequence ID" value="AAZ28108.1"/>
    <property type="molecule type" value="Genomic_DNA"/>
</dbReference>
<dbReference type="RefSeq" id="WP_011043571.1">
    <property type="nucleotide sequence ID" value="NC_003910.7"/>
</dbReference>
<dbReference type="SMR" id="Q480P2"/>
<dbReference type="STRING" id="167879.CPS_2765"/>
<dbReference type="KEGG" id="cps:CPS_2765"/>
<dbReference type="eggNOG" id="COG0361">
    <property type="taxonomic scope" value="Bacteria"/>
</dbReference>
<dbReference type="HOGENOM" id="CLU_151267_1_0_6"/>
<dbReference type="Proteomes" id="UP000000547">
    <property type="component" value="Chromosome"/>
</dbReference>
<dbReference type="GO" id="GO:0005829">
    <property type="term" value="C:cytosol"/>
    <property type="evidence" value="ECO:0007669"/>
    <property type="project" value="TreeGrafter"/>
</dbReference>
<dbReference type="GO" id="GO:0043022">
    <property type="term" value="F:ribosome binding"/>
    <property type="evidence" value="ECO:0007669"/>
    <property type="project" value="UniProtKB-UniRule"/>
</dbReference>
<dbReference type="GO" id="GO:0019843">
    <property type="term" value="F:rRNA binding"/>
    <property type="evidence" value="ECO:0007669"/>
    <property type="project" value="UniProtKB-UniRule"/>
</dbReference>
<dbReference type="GO" id="GO:0003743">
    <property type="term" value="F:translation initiation factor activity"/>
    <property type="evidence" value="ECO:0007669"/>
    <property type="project" value="UniProtKB-UniRule"/>
</dbReference>
<dbReference type="CDD" id="cd04451">
    <property type="entry name" value="S1_IF1"/>
    <property type="match status" value="1"/>
</dbReference>
<dbReference type="FunFam" id="2.40.50.140:FF:000002">
    <property type="entry name" value="Translation initiation factor IF-1"/>
    <property type="match status" value="1"/>
</dbReference>
<dbReference type="Gene3D" id="2.40.50.140">
    <property type="entry name" value="Nucleic acid-binding proteins"/>
    <property type="match status" value="1"/>
</dbReference>
<dbReference type="HAMAP" id="MF_00075">
    <property type="entry name" value="IF_1"/>
    <property type="match status" value="1"/>
</dbReference>
<dbReference type="InterPro" id="IPR012340">
    <property type="entry name" value="NA-bd_OB-fold"/>
</dbReference>
<dbReference type="InterPro" id="IPR006196">
    <property type="entry name" value="RNA-binding_domain_S1_IF1"/>
</dbReference>
<dbReference type="InterPro" id="IPR003029">
    <property type="entry name" value="S1_domain"/>
</dbReference>
<dbReference type="InterPro" id="IPR004368">
    <property type="entry name" value="TIF_IF1"/>
</dbReference>
<dbReference type="NCBIfam" id="TIGR00008">
    <property type="entry name" value="infA"/>
    <property type="match status" value="1"/>
</dbReference>
<dbReference type="PANTHER" id="PTHR33370">
    <property type="entry name" value="TRANSLATION INITIATION FACTOR IF-1, CHLOROPLASTIC"/>
    <property type="match status" value="1"/>
</dbReference>
<dbReference type="PANTHER" id="PTHR33370:SF1">
    <property type="entry name" value="TRANSLATION INITIATION FACTOR IF-1, CHLOROPLASTIC"/>
    <property type="match status" value="1"/>
</dbReference>
<dbReference type="Pfam" id="PF01176">
    <property type="entry name" value="eIF-1a"/>
    <property type="match status" value="1"/>
</dbReference>
<dbReference type="SMART" id="SM00316">
    <property type="entry name" value="S1"/>
    <property type="match status" value="1"/>
</dbReference>
<dbReference type="SUPFAM" id="SSF50249">
    <property type="entry name" value="Nucleic acid-binding proteins"/>
    <property type="match status" value="1"/>
</dbReference>
<dbReference type="PROSITE" id="PS50832">
    <property type="entry name" value="S1_IF1_TYPE"/>
    <property type="match status" value="1"/>
</dbReference>
<proteinExistence type="inferred from homology"/>
<comment type="function">
    <text evidence="1">One of the essential components for the initiation of protein synthesis. Stabilizes the binding of IF-2 and IF-3 on the 30S subunit to which N-formylmethionyl-tRNA(fMet) subsequently binds. Helps modulate mRNA selection, yielding the 30S pre-initiation complex (PIC). Upon addition of the 50S ribosomal subunit IF-1, IF-2 and IF-3 are released leaving the mature 70S translation initiation complex.</text>
</comment>
<comment type="subunit">
    <text evidence="1">Component of the 30S ribosomal translation pre-initiation complex which assembles on the 30S ribosome in the order IF-2 and IF-3, IF-1 and N-formylmethionyl-tRNA(fMet); mRNA recruitment can occur at any time during PIC assembly.</text>
</comment>
<comment type="subcellular location">
    <subcellularLocation>
        <location evidence="1">Cytoplasm</location>
    </subcellularLocation>
</comment>
<comment type="similarity">
    <text evidence="1">Belongs to the IF-1 family.</text>
</comment>
<name>IF1_COLP3</name>
<organism>
    <name type="scientific">Colwellia psychrerythraea (strain 34H / ATCC BAA-681)</name>
    <name type="common">Vibrio psychroerythus</name>
    <dbReference type="NCBI Taxonomy" id="167879"/>
    <lineage>
        <taxon>Bacteria</taxon>
        <taxon>Pseudomonadati</taxon>
        <taxon>Pseudomonadota</taxon>
        <taxon>Gammaproteobacteria</taxon>
        <taxon>Alteromonadales</taxon>
        <taxon>Colwelliaceae</taxon>
        <taxon>Colwellia</taxon>
    </lineage>
</organism>
<accession>Q480P2</accession>
<gene>
    <name evidence="1" type="primary">infA</name>
    <name type="ordered locus">CPS_2765</name>
</gene>
<sequence length="72" mass="8248">MAKEENIEMQGTVLDTLPNTMFRVELENGHVVTAHISGKMRKNYIRILTGDKVTVELTPYDLSKGRIIFRAR</sequence>
<evidence type="ECO:0000255" key="1">
    <source>
        <dbReference type="HAMAP-Rule" id="MF_00075"/>
    </source>
</evidence>
<keyword id="KW-0963">Cytoplasm</keyword>
<keyword id="KW-0396">Initiation factor</keyword>
<keyword id="KW-0648">Protein biosynthesis</keyword>
<keyword id="KW-0694">RNA-binding</keyword>
<keyword id="KW-0699">rRNA-binding</keyword>
<feature type="chain" id="PRO_0000263788" description="Translation initiation factor IF-1">
    <location>
        <begin position="1"/>
        <end position="72"/>
    </location>
</feature>
<feature type="domain" description="S1-like" evidence="1">
    <location>
        <begin position="1"/>
        <end position="72"/>
    </location>
</feature>